<proteinExistence type="predicted"/>
<organism>
    <name type="scientific">Bacillus subtilis (strain 168)</name>
    <dbReference type="NCBI Taxonomy" id="224308"/>
    <lineage>
        <taxon>Bacteria</taxon>
        <taxon>Bacillati</taxon>
        <taxon>Bacillota</taxon>
        <taxon>Bacilli</taxon>
        <taxon>Bacillales</taxon>
        <taxon>Bacillaceae</taxon>
        <taxon>Bacillus</taxon>
    </lineage>
</organism>
<dbReference type="EMBL" id="AL009126">
    <property type="protein sequence ID" value="CAB15161.2"/>
    <property type="molecule type" value="Genomic_DNA"/>
</dbReference>
<dbReference type="PIR" id="B70026">
    <property type="entry name" value="B70026"/>
</dbReference>
<dbReference type="RefSeq" id="WP_003243784.1">
    <property type="nucleotide sequence ID" value="NZ_OZ025638.1"/>
</dbReference>
<dbReference type="SMR" id="O32089"/>
<dbReference type="FunCoup" id="O32089">
    <property type="interactions" value="46"/>
</dbReference>
<dbReference type="STRING" id="224308.BSU31730"/>
<dbReference type="PaxDb" id="224308-BSU31730"/>
<dbReference type="EnsemblBacteria" id="CAB15161">
    <property type="protein sequence ID" value="CAB15161"/>
    <property type="gene ID" value="BSU_31730"/>
</dbReference>
<dbReference type="GeneID" id="938859"/>
<dbReference type="KEGG" id="bsu:BSU31730"/>
<dbReference type="PATRIC" id="fig|224308.179.peg.3439"/>
<dbReference type="InParanoid" id="O32089"/>
<dbReference type="OrthoDB" id="2615349at2"/>
<dbReference type="BioCyc" id="BSUB:BSU31730-MONOMER"/>
<dbReference type="Proteomes" id="UP000001570">
    <property type="component" value="Chromosome"/>
</dbReference>
<dbReference type="InterPro" id="IPR016559">
    <property type="entry name" value="UCP009597"/>
</dbReference>
<dbReference type="PIRSF" id="PIRSF009597">
    <property type="entry name" value="UCP009597"/>
    <property type="match status" value="1"/>
</dbReference>
<gene>
    <name type="primary">yuzC</name>
    <name type="ordered locus">BSU31730</name>
</gene>
<sequence length="122" mass="14199">MRYRYPWFYVYPYEVRRPPAPANNIDTFIRSAKQAAGIFADAQLVLSRIAGSRELSRRILTAAEQSDKQTIRRLIKQMGVRHEVDTVFNPDGIYISLIGTQSRMILALRWSEDRNHFASIRL</sequence>
<reference key="1">
    <citation type="journal article" date="1997" name="Nature">
        <title>The complete genome sequence of the Gram-positive bacterium Bacillus subtilis.</title>
        <authorList>
            <person name="Kunst F."/>
            <person name="Ogasawara N."/>
            <person name="Moszer I."/>
            <person name="Albertini A.M."/>
            <person name="Alloni G."/>
            <person name="Azevedo V."/>
            <person name="Bertero M.G."/>
            <person name="Bessieres P."/>
            <person name="Bolotin A."/>
            <person name="Borchert S."/>
            <person name="Borriss R."/>
            <person name="Boursier L."/>
            <person name="Brans A."/>
            <person name="Braun M."/>
            <person name="Brignell S.C."/>
            <person name="Bron S."/>
            <person name="Brouillet S."/>
            <person name="Bruschi C.V."/>
            <person name="Caldwell B."/>
            <person name="Capuano V."/>
            <person name="Carter N.M."/>
            <person name="Choi S.-K."/>
            <person name="Codani J.-J."/>
            <person name="Connerton I.F."/>
            <person name="Cummings N.J."/>
            <person name="Daniel R.A."/>
            <person name="Denizot F."/>
            <person name="Devine K.M."/>
            <person name="Duesterhoeft A."/>
            <person name="Ehrlich S.D."/>
            <person name="Emmerson P.T."/>
            <person name="Entian K.-D."/>
            <person name="Errington J."/>
            <person name="Fabret C."/>
            <person name="Ferrari E."/>
            <person name="Foulger D."/>
            <person name="Fritz C."/>
            <person name="Fujita M."/>
            <person name="Fujita Y."/>
            <person name="Fuma S."/>
            <person name="Galizzi A."/>
            <person name="Galleron N."/>
            <person name="Ghim S.-Y."/>
            <person name="Glaser P."/>
            <person name="Goffeau A."/>
            <person name="Golightly E.J."/>
            <person name="Grandi G."/>
            <person name="Guiseppi G."/>
            <person name="Guy B.J."/>
            <person name="Haga K."/>
            <person name="Haiech J."/>
            <person name="Harwood C.R."/>
            <person name="Henaut A."/>
            <person name="Hilbert H."/>
            <person name="Holsappel S."/>
            <person name="Hosono S."/>
            <person name="Hullo M.-F."/>
            <person name="Itaya M."/>
            <person name="Jones L.-M."/>
            <person name="Joris B."/>
            <person name="Karamata D."/>
            <person name="Kasahara Y."/>
            <person name="Klaerr-Blanchard M."/>
            <person name="Klein C."/>
            <person name="Kobayashi Y."/>
            <person name="Koetter P."/>
            <person name="Koningstein G."/>
            <person name="Krogh S."/>
            <person name="Kumano M."/>
            <person name="Kurita K."/>
            <person name="Lapidus A."/>
            <person name="Lardinois S."/>
            <person name="Lauber J."/>
            <person name="Lazarevic V."/>
            <person name="Lee S.-M."/>
            <person name="Levine A."/>
            <person name="Liu H."/>
            <person name="Masuda S."/>
            <person name="Mauel C."/>
            <person name="Medigue C."/>
            <person name="Medina N."/>
            <person name="Mellado R.P."/>
            <person name="Mizuno M."/>
            <person name="Moestl D."/>
            <person name="Nakai S."/>
            <person name="Noback M."/>
            <person name="Noone D."/>
            <person name="O'Reilly M."/>
            <person name="Ogawa K."/>
            <person name="Ogiwara A."/>
            <person name="Oudega B."/>
            <person name="Park S.-H."/>
            <person name="Parro V."/>
            <person name="Pohl T.M."/>
            <person name="Portetelle D."/>
            <person name="Porwollik S."/>
            <person name="Prescott A.M."/>
            <person name="Presecan E."/>
            <person name="Pujic P."/>
            <person name="Purnelle B."/>
            <person name="Rapoport G."/>
            <person name="Rey M."/>
            <person name="Reynolds S."/>
            <person name="Rieger M."/>
            <person name="Rivolta C."/>
            <person name="Rocha E."/>
            <person name="Roche B."/>
            <person name="Rose M."/>
            <person name="Sadaie Y."/>
            <person name="Sato T."/>
            <person name="Scanlan E."/>
            <person name="Schleich S."/>
            <person name="Schroeter R."/>
            <person name="Scoffone F."/>
            <person name="Sekiguchi J."/>
            <person name="Sekowska A."/>
            <person name="Seror S.J."/>
            <person name="Serror P."/>
            <person name="Shin B.-S."/>
            <person name="Soldo B."/>
            <person name="Sorokin A."/>
            <person name="Tacconi E."/>
            <person name="Takagi T."/>
            <person name="Takahashi H."/>
            <person name="Takemaru K."/>
            <person name="Takeuchi M."/>
            <person name="Tamakoshi A."/>
            <person name="Tanaka T."/>
            <person name="Terpstra P."/>
            <person name="Tognoni A."/>
            <person name="Tosato V."/>
            <person name="Uchiyama S."/>
            <person name="Vandenbol M."/>
            <person name="Vannier F."/>
            <person name="Vassarotti A."/>
            <person name="Viari A."/>
            <person name="Wambutt R."/>
            <person name="Wedler E."/>
            <person name="Wedler H."/>
            <person name="Weitzenegger T."/>
            <person name="Winters P."/>
            <person name="Wipat A."/>
            <person name="Yamamoto H."/>
            <person name="Yamane K."/>
            <person name="Yasumoto K."/>
            <person name="Yata K."/>
            <person name="Yoshida K."/>
            <person name="Yoshikawa H.-F."/>
            <person name="Zumstein E."/>
            <person name="Yoshikawa H."/>
            <person name="Danchin A."/>
        </authorList>
    </citation>
    <scope>NUCLEOTIDE SEQUENCE [LARGE SCALE GENOMIC DNA]</scope>
    <source>
        <strain>168</strain>
    </source>
</reference>
<reference key="2">
    <citation type="journal article" date="2009" name="Microbiology">
        <title>From a consortium sequence to a unified sequence: the Bacillus subtilis 168 reference genome a decade later.</title>
        <authorList>
            <person name="Barbe V."/>
            <person name="Cruveiller S."/>
            <person name="Kunst F."/>
            <person name="Lenoble P."/>
            <person name="Meurice G."/>
            <person name="Sekowska A."/>
            <person name="Vallenet D."/>
            <person name="Wang T."/>
            <person name="Moszer I."/>
            <person name="Medigue C."/>
            <person name="Danchin A."/>
        </authorList>
    </citation>
    <scope>SEQUENCE REVISION TO 18 AND 51</scope>
</reference>
<keyword id="KW-1185">Reference proteome</keyword>
<name>YUZC_BACSU</name>
<protein>
    <recommendedName>
        <fullName>Uncharacterized protein YuzC</fullName>
    </recommendedName>
</protein>
<feature type="chain" id="PRO_0000049930" description="Uncharacterized protein YuzC">
    <location>
        <begin position="1"/>
        <end position="122"/>
    </location>
</feature>
<accession>O32089</accession>